<proteinExistence type="inferred from homology"/>
<dbReference type="EC" id="6.6.1.1"/>
<dbReference type="EMBL" id="Z67753">
    <property type="protein sequence ID" value="CAA91677.1"/>
    <property type="molecule type" value="Genomic_DNA"/>
</dbReference>
<dbReference type="PIR" id="S78304">
    <property type="entry name" value="S78304"/>
</dbReference>
<dbReference type="RefSeq" id="NP_043645.1">
    <property type="nucleotide sequence ID" value="NC_001713.1"/>
</dbReference>
<dbReference type="SMR" id="P49469"/>
<dbReference type="GeneID" id="801692"/>
<dbReference type="UniPathway" id="UPA00668"/>
<dbReference type="GO" id="GO:0009507">
    <property type="term" value="C:chloroplast"/>
    <property type="evidence" value="ECO:0007669"/>
    <property type="project" value="UniProtKB-SubCell"/>
</dbReference>
<dbReference type="GO" id="GO:0005524">
    <property type="term" value="F:ATP binding"/>
    <property type="evidence" value="ECO:0007669"/>
    <property type="project" value="UniProtKB-KW"/>
</dbReference>
<dbReference type="GO" id="GO:0016887">
    <property type="term" value="F:ATP hydrolysis activity"/>
    <property type="evidence" value="ECO:0007669"/>
    <property type="project" value="InterPro"/>
</dbReference>
<dbReference type="GO" id="GO:0016851">
    <property type="term" value="F:magnesium chelatase activity"/>
    <property type="evidence" value="ECO:0007669"/>
    <property type="project" value="UniProtKB-EC"/>
</dbReference>
<dbReference type="GO" id="GO:0015995">
    <property type="term" value="P:chlorophyll biosynthetic process"/>
    <property type="evidence" value="ECO:0007669"/>
    <property type="project" value="UniProtKB-UniPathway"/>
</dbReference>
<dbReference type="GO" id="GO:0015979">
    <property type="term" value="P:photosynthesis"/>
    <property type="evidence" value="ECO:0007669"/>
    <property type="project" value="UniProtKB-KW"/>
</dbReference>
<dbReference type="CDD" id="cd00009">
    <property type="entry name" value="AAA"/>
    <property type="match status" value="1"/>
</dbReference>
<dbReference type="FunFam" id="1.10.8.80:FF:000001">
    <property type="entry name" value="Mg-protoporphyrin IX chelatase"/>
    <property type="match status" value="1"/>
</dbReference>
<dbReference type="FunFam" id="3.40.50.300:FF:000601">
    <property type="entry name" value="Mg-protoporphyrin IX chelatase"/>
    <property type="match status" value="1"/>
</dbReference>
<dbReference type="Gene3D" id="1.10.8.80">
    <property type="entry name" value="Magnesium chelatase subunit I, C-Terminal domain"/>
    <property type="match status" value="1"/>
</dbReference>
<dbReference type="Gene3D" id="3.40.50.300">
    <property type="entry name" value="P-loop containing nucleotide triphosphate hydrolases"/>
    <property type="match status" value="1"/>
</dbReference>
<dbReference type="InterPro" id="IPR003593">
    <property type="entry name" value="AAA+_ATPase"/>
</dbReference>
<dbReference type="InterPro" id="IPR045006">
    <property type="entry name" value="CHLI-like"/>
</dbReference>
<dbReference type="InterPro" id="IPR041628">
    <property type="entry name" value="ChlI/MoxR_AAA_lid"/>
</dbReference>
<dbReference type="InterPro" id="IPR011775">
    <property type="entry name" value="Mg_chelatase_ATPase-isu"/>
</dbReference>
<dbReference type="InterPro" id="IPR000523">
    <property type="entry name" value="Mg_chelatse_chII-like_cat_dom"/>
</dbReference>
<dbReference type="InterPro" id="IPR027417">
    <property type="entry name" value="P-loop_NTPase"/>
</dbReference>
<dbReference type="NCBIfam" id="TIGR02030">
    <property type="entry name" value="BchI-ChlI"/>
    <property type="match status" value="1"/>
</dbReference>
<dbReference type="PANTHER" id="PTHR32039">
    <property type="entry name" value="MAGNESIUM-CHELATASE SUBUNIT CHLI"/>
    <property type="match status" value="1"/>
</dbReference>
<dbReference type="PANTHER" id="PTHR32039:SF9">
    <property type="entry name" value="MAGNESIUM-CHELATASE SUBUNIT CHLI-2, CHLOROPLASTIC"/>
    <property type="match status" value="1"/>
</dbReference>
<dbReference type="Pfam" id="PF17863">
    <property type="entry name" value="AAA_lid_2"/>
    <property type="match status" value="1"/>
</dbReference>
<dbReference type="Pfam" id="PF01078">
    <property type="entry name" value="Mg_chelatase"/>
    <property type="match status" value="1"/>
</dbReference>
<dbReference type="SMART" id="SM00382">
    <property type="entry name" value="AAA"/>
    <property type="match status" value="1"/>
</dbReference>
<dbReference type="SUPFAM" id="SSF52540">
    <property type="entry name" value="P-loop containing nucleoside triphosphate hydrolases"/>
    <property type="match status" value="1"/>
</dbReference>
<organism>
    <name type="scientific">Trieres chinensis</name>
    <name type="common">Marine centric diatom</name>
    <name type="synonym">Odontella sinensis</name>
    <dbReference type="NCBI Taxonomy" id="1514140"/>
    <lineage>
        <taxon>Eukaryota</taxon>
        <taxon>Sar</taxon>
        <taxon>Stramenopiles</taxon>
        <taxon>Ochrophyta</taxon>
        <taxon>Bacillariophyta</taxon>
        <taxon>Mediophyceae</taxon>
        <taxon>Biddulphiophycidae</taxon>
        <taxon>Eupodiscales</taxon>
        <taxon>Parodontellaceae</taxon>
        <taxon>Trieres</taxon>
    </lineage>
</organism>
<sequence>MVTQDLKKFSTPVFPFTAIVGQEEMKLALQLNVIDPKIGGVMIMGDRGTGKSTTIRAIADLLPEIEVVKDDPFNSHKSDLDLMGNEIKLAIQNGESLETELIKIPMVDLPLGATEDRVCGTIDIEKALTEGVKAFEPGLLAKANRGILYVDEVNLLDDHLVDILLDSAASGWNTVEREGISIRHPARFVLVGSGNPEEGELRPQLLDRFGMHAEIRTVKDPILRVKVVEERTSFDQTPMVWIENYEKQQQELRDRIVLAQKVLPTVELDYDLRVKISEVCSQLDVDGLRGDIVTNRAAKAHAAYHGRDKVTVEDIAKIITLCLRHRLRKDPLETIDSGNKVSKVFNEIFEIEE</sequence>
<keyword id="KW-0067">ATP-binding</keyword>
<keyword id="KW-0149">Chlorophyll biosynthesis</keyword>
<keyword id="KW-0150">Chloroplast</keyword>
<keyword id="KW-0436">Ligase</keyword>
<keyword id="KW-0547">Nucleotide-binding</keyword>
<keyword id="KW-0602">Photosynthesis</keyword>
<keyword id="KW-0934">Plastid</keyword>
<geneLocation type="chloroplast"/>
<feature type="chain" id="PRO_0000206871" description="Magnesium-chelatase subunit ChlI">
    <location>
        <begin position="1"/>
        <end position="353"/>
    </location>
</feature>
<feature type="binding site" evidence="1">
    <location>
        <begin position="45"/>
        <end position="52"/>
    </location>
    <ligand>
        <name>ATP</name>
        <dbReference type="ChEBI" id="CHEBI:30616"/>
    </ligand>
</feature>
<name>CHLI_TRICV</name>
<gene>
    <name type="primary">chlI</name>
</gene>
<comment type="function">
    <text>Involved in chlorophyll biosynthesis; introduces a magnesium ion into protoporphyrin IX to yield Mg-protoporphyrin IX.</text>
</comment>
<comment type="catalytic activity">
    <reaction>
        <text>protoporphyrin IX + Mg(2+) + ATP + H2O = Mg-protoporphyrin IX + ADP + phosphate + 3 H(+)</text>
        <dbReference type="Rhea" id="RHEA:13961"/>
        <dbReference type="ChEBI" id="CHEBI:15377"/>
        <dbReference type="ChEBI" id="CHEBI:15378"/>
        <dbReference type="ChEBI" id="CHEBI:18420"/>
        <dbReference type="ChEBI" id="CHEBI:30616"/>
        <dbReference type="ChEBI" id="CHEBI:43474"/>
        <dbReference type="ChEBI" id="CHEBI:57306"/>
        <dbReference type="ChEBI" id="CHEBI:60492"/>
        <dbReference type="ChEBI" id="CHEBI:456216"/>
        <dbReference type="EC" id="6.6.1.1"/>
    </reaction>
</comment>
<comment type="pathway">
    <text>Porphyrin-containing compound metabolism; chlorophyll biosynthesis.</text>
</comment>
<comment type="subcellular location">
    <subcellularLocation>
        <location>Plastid</location>
        <location>Chloroplast</location>
    </subcellularLocation>
</comment>
<comment type="similarity">
    <text evidence="2">Belongs to the Mg-chelatase subunits D/I family.</text>
</comment>
<protein>
    <recommendedName>
        <fullName>Magnesium-chelatase subunit ChlI</fullName>
        <ecNumber>6.6.1.1</ecNumber>
    </recommendedName>
    <alternativeName>
        <fullName>Mg-protoporphyrin IX chelatase</fullName>
    </alternativeName>
</protein>
<evidence type="ECO:0000255" key="1"/>
<evidence type="ECO:0000305" key="2"/>
<accession>P49469</accession>
<reference key="1">
    <citation type="journal article" date="1995" name="Plant Mol. Biol. Rep.">
        <title>The chloroplast genome of a chlorophyll a+c-containing alga, Odontella sinensis.</title>
        <authorList>
            <person name="Kowallik K.V."/>
            <person name="Stoebe B."/>
            <person name="Schaffran I."/>
            <person name="Kroth-Pancic P."/>
            <person name="Freier U."/>
        </authorList>
    </citation>
    <scope>NUCLEOTIDE SEQUENCE [LARGE SCALE GENOMIC DNA]</scope>
</reference>